<dbReference type="EC" id="3.4.23.-" evidence="2"/>
<dbReference type="EMBL" id="FO080569">
    <property type="protein sequence ID" value="CCD64751.1"/>
    <property type="molecule type" value="Genomic_DNA"/>
</dbReference>
<dbReference type="PIR" id="T29410">
    <property type="entry name" value="T29410"/>
</dbReference>
<dbReference type="RefSeq" id="NP_505133.1">
    <property type="nucleotide sequence ID" value="NM_072732.10"/>
</dbReference>
<dbReference type="SMR" id="O01530"/>
<dbReference type="BioGRID" id="44250">
    <property type="interactions" value="13"/>
</dbReference>
<dbReference type="DIP" id="DIP-24896N"/>
<dbReference type="FunCoup" id="O01530">
    <property type="interactions" value="24"/>
</dbReference>
<dbReference type="IntAct" id="O01530">
    <property type="interactions" value="3"/>
</dbReference>
<dbReference type="MINT" id="O01530"/>
<dbReference type="STRING" id="6239.F21F8.7.1"/>
<dbReference type="MEROPS" id="A01.A71"/>
<dbReference type="GlyCosmos" id="O01530">
    <property type="glycosylation" value="1 site, No reported glycans"/>
</dbReference>
<dbReference type="PaxDb" id="6239-F21F8.7"/>
<dbReference type="PeptideAtlas" id="O01530"/>
<dbReference type="EnsemblMetazoa" id="F21F8.7.1">
    <property type="protein sequence ID" value="F21F8.7.1"/>
    <property type="gene ID" value="WBGene00000219"/>
</dbReference>
<dbReference type="GeneID" id="179209"/>
<dbReference type="KEGG" id="cel:CELE_F21F8.7"/>
<dbReference type="UCSC" id="F21F8.7.1">
    <property type="organism name" value="c. elegans"/>
</dbReference>
<dbReference type="AGR" id="WB:WBGene00000219"/>
<dbReference type="CTD" id="179209"/>
<dbReference type="WormBase" id="F21F8.7">
    <property type="protein sequence ID" value="CE09542"/>
    <property type="gene ID" value="WBGene00000219"/>
    <property type="gene designation" value="asp-6"/>
</dbReference>
<dbReference type="eggNOG" id="KOG1339">
    <property type="taxonomic scope" value="Eukaryota"/>
</dbReference>
<dbReference type="HOGENOM" id="CLU_013253_3_4_1"/>
<dbReference type="InParanoid" id="O01530"/>
<dbReference type="OMA" id="WYGGVQS"/>
<dbReference type="OrthoDB" id="5790032at2759"/>
<dbReference type="PhylomeDB" id="O01530"/>
<dbReference type="Reactome" id="R-CEL-2022377">
    <property type="pathway name" value="Metabolism of Angiotensinogen to Angiotensins"/>
</dbReference>
<dbReference type="PRO" id="PR:O01530"/>
<dbReference type="Proteomes" id="UP000001940">
    <property type="component" value="Chromosome V"/>
</dbReference>
<dbReference type="Bgee" id="WBGene00000219">
    <property type="expression patterns" value="Expressed in adult organism and 4 other cell types or tissues"/>
</dbReference>
<dbReference type="GO" id="GO:0005615">
    <property type="term" value="C:extracellular space"/>
    <property type="evidence" value="ECO:0000314"/>
    <property type="project" value="WormBase"/>
</dbReference>
<dbReference type="GO" id="GO:0005764">
    <property type="term" value="C:lysosome"/>
    <property type="evidence" value="ECO:0000318"/>
    <property type="project" value="GO_Central"/>
</dbReference>
<dbReference type="GO" id="GO:0004190">
    <property type="term" value="F:aspartic-type endopeptidase activity"/>
    <property type="evidence" value="ECO:0000318"/>
    <property type="project" value="GO_Central"/>
</dbReference>
<dbReference type="GO" id="GO:0006915">
    <property type="term" value="P:apoptotic process"/>
    <property type="evidence" value="ECO:0000318"/>
    <property type="project" value="GO_Central"/>
</dbReference>
<dbReference type="GO" id="GO:0006508">
    <property type="term" value="P:proteolysis"/>
    <property type="evidence" value="ECO:0000318"/>
    <property type="project" value="GO_Central"/>
</dbReference>
<dbReference type="CDD" id="cd05471">
    <property type="entry name" value="pepsin_like"/>
    <property type="match status" value="1"/>
</dbReference>
<dbReference type="FunFam" id="2.40.70.10:FF:000052">
    <property type="entry name" value="ASpartyl Protease"/>
    <property type="match status" value="1"/>
</dbReference>
<dbReference type="FunFam" id="2.40.70.10:FF:000062">
    <property type="entry name" value="ASpartyl Protease"/>
    <property type="match status" value="1"/>
</dbReference>
<dbReference type="Gene3D" id="2.40.70.10">
    <property type="entry name" value="Acid Proteases"/>
    <property type="match status" value="2"/>
</dbReference>
<dbReference type="InterPro" id="IPR001461">
    <property type="entry name" value="Aspartic_peptidase_A1"/>
</dbReference>
<dbReference type="InterPro" id="IPR001969">
    <property type="entry name" value="Aspartic_peptidase_AS"/>
</dbReference>
<dbReference type="InterPro" id="IPR034164">
    <property type="entry name" value="Pepsin-like_dom"/>
</dbReference>
<dbReference type="InterPro" id="IPR033121">
    <property type="entry name" value="PEPTIDASE_A1"/>
</dbReference>
<dbReference type="InterPro" id="IPR021109">
    <property type="entry name" value="Peptidase_aspartic_dom_sf"/>
</dbReference>
<dbReference type="PANTHER" id="PTHR47966:SF16">
    <property type="entry name" value="ASPARTIC PROTEASE 6"/>
    <property type="match status" value="1"/>
</dbReference>
<dbReference type="PANTHER" id="PTHR47966">
    <property type="entry name" value="BETA-SITE APP-CLEAVING ENZYME, ISOFORM A-RELATED"/>
    <property type="match status" value="1"/>
</dbReference>
<dbReference type="Pfam" id="PF00026">
    <property type="entry name" value="Asp"/>
    <property type="match status" value="1"/>
</dbReference>
<dbReference type="PRINTS" id="PR00792">
    <property type="entry name" value="PEPSIN"/>
</dbReference>
<dbReference type="SUPFAM" id="SSF50630">
    <property type="entry name" value="Acid proteases"/>
    <property type="match status" value="1"/>
</dbReference>
<dbReference type="PROSITE" id="PS00141">
    <property type="entry name" value="ASP_PROTEASE"/>
    <property type="match status" value="1"/>
</dbReference>
<dbReference type="PROSITE" id="PS51767">
    <property type="entry name" value="PEPTIDASE_A1"/>
    <property type="match status" value="1"/>
</dbReference>
<protein>
    <recommendedName>
        <fullName evidence="7 9">Aspartic protease 6</fullName>
        <ecNumber evidence="2">3.4.23.-</ecNumber>
    </recommendedName>
</protein>
<keyword id="KW-0064">Aspartyl protease</keyword>
<keyword id="KW-1015">Disulfide bond</keyword>
<keyword id="KW-0325">Glycoprotein</keyword>
<keyword id="KW-0378">Hydrolase</keyword>
<keyword id="KW-0645">Protease</keyword>
<keyword id="KW-1185">Reference proteome</keyword>
<keyword id="KW-0964">Secreted</keyword>
<keyword id="KW-0732">Signal</keyword>
<reference key="1">
    <citation type="journal article" date="1998" name="Science">
        <title>Genome sequence of the nematode C. elegans: a platform for investigating biology.</title>
        <authorList>
            <consortium name="The C. elegans sequencing consortium"/>
        </authorList>
    </citation>
    <scope>NUCLEOTIDE SEQUENCE [LARGE SCALE GENOMIC DNA]</scope>
    <source>
        <strain>Bristol N2</strain>
    </source>
</reference>
<reference key="2">
    <citation type="journal article" date="2006" name="Biol. Chem.">
        <title>First identification of a phosphorylcholine-substituted protein from Caenorhabditis elegans: isolation and characterization of the aspartyl protease ASP-6.</title>
        <authorList>
            <person name="Lochnit G."/>
            <person name="Grabitzki J."/>
            <person name="Henkel B."/>
            <person name="Tavernarakis N."/>
            <person name="Geyer R."/>
        </authorList>
    </citation>
    <scope>SUBCELLULAR LOCATION</scope>
    <scope>TISSUE SPECIFICITY</scope>
    <scope>IDENTIFICATION BY MASS SPECTROMETRY</scope>
    <scope>GLYCOSYLATION</scope>
</reference>
<feature type="signal peptide" evidence="3">
    <location>
        <begin position="1"/>
        <end position="15"/>
    </location>
</feature>
<feature type="chain" id="PRO_0000307864" description="Aspartic protease 6">
    <location>
        <begin position="16"/>
        <end position="389"/>
    </location>
</feature>
<feature type="domain" description="Peptidase A1" evidence="4">
    <location>
        <begin position="71"/>
        <end position="384"/>
    </location>
</feature>
<feature type="active site" evidence="5">
    <location>
        <position position="89"/>
    </location>
</feature>
<feature type="active site" evidence="5">
    <location>
        <position position="277"/>
    </location>
</feature>
<feature type="glycosylation site" description="N-linked (GlcNAc...) asparagine" evidence="3">
    <location>
        <position position="74"/>
    </location>
</feature>
<feature type="disulfide bond" evidence="1">
    <location>
        <begin position="102"/>
        <end position="106"/>
    </location>
</feature>
<feature type="disulfide bond" evidence="4">
    <location>
        <begin position="312"/>
        <end position="344"/>
    </location>
</feature>
<organism>
    <name type="scientific">Caenorhabditis elegans</name>
    <dbReference type="NCBI Taxonomy" id="6239"/>
    <lineage>
        <taxon>Eukaryota</taxon>
        <taxon>Metazoa</taxon>
        <taxon>Ecdysozoa</taxon>
        <taxon>Nematoda</taxon>
        <taxon>Chromadorea</taxon>
        <taxon>Rhabditida</taxon>
        <taxon>Rhabditina</taxon>
        <taxon>Rhabditomorpha</taxon>
        <taxon>Rhabditoidea</taxon>
        <taxon>Rhabditidae</taxon>
        <taxon>Peloderinae</taxon>
        <taxon>Caenorhabditis</taxon>
    </lineage>
</organism>
<gene>
    <name evidence="7 9" type="primary">asp-6</name>
    <name evidence="9" type="ORF">F21F8.7</name>
</gene>
<accession>O01530</accession>
<evidence type="ECO:0000250" key="1">
    <source>
        <dbReference type="UniProtKB" id="P0DJD7"/>
    </source>
</evidence>
<evidence type="ECO:0000250" key="2">
    <source>
        <dbReference type="UniProtKB" id="Q9N9H4"/>
    </source>
</evidence>
<evidence type="ECO:0000255" key="3"/>
<evidence type="ECO:0000255" key="4">
    <source>
        <dbReference type="PROSITE-ProRule" id="PRU01103"/>
    </source>
</evidence>
<evidence type="ECO:0000255" key="5">
    <source>
        <dbReference type="PROSITE-ProRule" id="PRU10094"/>
    </source>
</evidence>
<evidence type="ECO:0000269" key="6">
    <source>
    </source>
</evidence>
<evidence type="ECO:0000303" key="7">
    <source>
    </source>
</evidence>
<evidence type="ECO:0000305" key="8"/>
<evidence type="ECO:0000312" key="9">
    <source>
        <dbReference type="WormBase" id="F21F8.7"/>
    </source>
</evidence>
<name>ASP6_CAEEL</name>
<comment type="function">
    <text evidence="2">Aspartic protease.</text>
</comment>
<comment type="subcellular location">
    <subcellularLocation>
        <location evidence="6">Secreted</location>
    </subcellularLocation>
    <text evidence="6">Secreted into the pseudocoelom.</text>
</comment>
<comment type="tissue specificity">
    <text evidence="6">Expressed in intestine, muscles, pharynx and hypodermis.</text>
</comment>
<comment type="PTM">
    <text evidence="6">Glycosylated. Has phosphorylcholine-substituted oligosaccharide N-glycans.</text>
</comment>
<comment type="similarity">
    <text evidence="8">Belongs to the peptidase A1 family.</text>
</comment>
<sequence>MKTFILLAVLGLASASVHQHKIVWRESKKMGMIRTGQYPAYLEYQRNLRAVSPNVLANLPQNVNDFGDFEYLGNITIGTPDQGFIVVLDTGSSNLWIPGPTCKTNCKTKSKFDSTASSTFVKNGKSWTIQYGSGDAAGILGQDTVRFGAKGDSQLSVPTTTFGIASKISADFKNDATDGILGLAFTSLAVDGVVPPLINAINQGILDQPLFSVWLEHRGAANNVGGGVFTYGAIDTTNCGALVAYQPLSSATYYQFKAAGFKLGSYSNTKTVDVISDTGTSFLGGPQSVVDGLAKAAGATYDDFNEVYFIDCAAQPGTLDITIGTNTYSIQPVNYIVDAGNGQCLFAAFPFDFGGFGPSWILGDPFIRQYCNIYDIGNKRMGFAPSLQK</sequence>
<proteinExistence type="evidence at protein level"/>